<reference key="1">
    <citation type="submission" date="2007-08" db="EMBL/GenBank/DDBJ databases">
        <authorList>
            <consortium name="The Citrobacter koseri Genome Sequencing Project"/>
            <person name="McClelland M."/>
            <person name="Sanderson E.K."/>
            <person name="Porwollik S."/>
            <person name="Spieth J."/>
            <person name="Clifton W.S."/>
            <person name="Latreille P."/>
            <person name="Courtney L."/>
            <person name="Wang C."/>
            <person name="Pepin K."/>
            <person name="Bhonagiri V."/>
            <person name="Nash W."/>
            <person name="Johnson M."/>
            <person name="Thiruvilangam P."/>
            <person name="Wilson R."/>
        </authorList>
    </citation>
    <scope>NUCLEOTIDE SEQUENCE [LARGE SCALE GENOMIC DNA]</scope>
    <source>
        <strain>ATCC BAA-895 / CDC 4225-83 / SGSC4696</strain>
    </source>
</reference>
<feature type="chain" id="PRO_1000046297" description="Formimidoylglutamase">
    <location>
        <begin position="1"/>
        <end position="313"/>
    </location>
</feature>
<feature type="binding site" evidence="1">
    <location>
        <position position="130"/>
    </location>
    <ligand>
        <name>Mn(2+)</name>
        <dbReference type="ChEBI" id="CHEBI:29035"/>
        <label>1</label>
    </ligand>
</feature>
<feature type="binding site" evidence="1">
    <location>
        <position position="155"/>
    </location>
    <ligand>
        <name>Mn(2+)</name>
        <dbReference type="ChEBI" id="CHEBI:29035"/>
        <label>1</label>
    </ligand>
</feature>
<feature type="binding site" evidence="1">
    <location>
        <position position="155"/>
    </location>
    <ligand>
        <name>Mn(2+)</name>
        <dbReference type="ChEBI" id="CHEBI:29035"/>
        <label>2</label>
    </ligand>
</feature>
<feature type="binding site" evidence="1">
    <location>
        <position position="157"/>
    </location>
    <ligand>
        <name>Mn(2+)</name>
        <dbReference type="ChEBI" id="CHEBI:29035"/>
        <label>2</label>
    </ligand>
</feature>
<feature type="binding site" evidence="1">
    <location>
        <position position="159"/>
    </location>
    <ligand>
        <name>Mn(2+)</name>
        <dbReference type="ChEBI" id="CHEBI:29035"/>
        <label>1</label>
    </ligand>
</feature>
<feature type="binding site" evidence="1">
    <location>
        <position position="241"/>
    </location>
    <ligand>
        <name>Mn(2+)</name>
        <dbReference type="ChEBI" id="CHEBI:29035"/>
        <label>1</label>
    </ligand>
</feature>
<feature type="binding site" evidence="1">
    <location>
        <position position="241"/>
    </location>
    <ligand>
        <name>Mn(2+)</name>
        <dbReference type="ChEBI" id="CHEBI:29035"/>
        <label>2</label>
    </ligand>
</feature>
<feature type="binding site" evidence="1">
    <location>
        <position position="243"/>
    </location>
    <ligand>
        <name>Mn(2+)</name>
        <dbReference type="ChEBI" id="CHEBI:29035"/>
        <label>2</label>
    </ligand>
</feature>
<evidence type="ECO:0000255" key="1">
    <source>
        <dbReference type="HAMAP-Rule" id="MF_00737"/>
    </source>
</evidence>
<accession>A8AJ18</accession>
<comment type="function">
    <text evidence="1">Catalyzes the conversion of N-formimidoyl-L-glutamate to L-glutamate and formamide.</text>
</comment>
<comment type="catalytic activity">
    <reaction evidence="1">
        <text>N-formimidoyl-L-glutamate + H2O = formamide + L-glutamate</text>
        <dbReference type="Rhea" id="RHEA:22492"/>
        <dbReference type="ChEBI" id="CHEBI:15377"/>
        <dbReference type="ChEBI" id="CHEBI:16397"/>
        <dbReference type="ChEBI" id="CHEBI:29985"/>
        <dbReference type="ChEBI" id="CHEBI:58928"/>
        <dbReference type="EC" id="3.5.3.8"/>
    </reaction>
</comment>
<comment type="cofactor">
    <cofactor evidence="1">
        <name>Mn(2+)</name>
        <dbReference type="ChEBI" id="CHEBI:29035"/>
    </cofactor>
    <text evidence="1">Binds 2 manganese ions per subunit.</text>
</comment>
<comment type="pathway">
    <text evidence="1">Amino-acid degradation; L-histidine degradation into L-glutamate; L-glutamate from N-formimidoyl-L-glutamate (hydrolase route): step 1/1.</text>
</comment>
<comment type="similarity">
    <text evidence="1">Belongs to the arginase family.</text>
</comment>
<gene>
    <name evidence="1" type="primary">hutG</name>
    <name type="ordered locus">CKO_02359</name>
</gene>
<dbReference type="EC" id="3.5.3.8" evidence="1"/>
<dbReference type="EMBL" id="CP000822">
    <property type="protein sequence ID" value="ABV13481.1"/>
    <property type="molecule type" value="Genomic_DNA"/>
</dbReference>
<dbReference type="RefSeq" id="WP_012133208.1">
    <property type="nucleotide sequence ID" value="NC_009792.1"/>
</dbReference>
<dbReference type="SMR" id="A8AJ18"/>
<dbReference type="STRING" id="290338.CKO_02359"/>
<dbReference type="GeneID" id="45136262"/>
<dbReference type="KEGG" id="cko:CKO_02359"/>
<dbReference type="HOGENOM" id="CLU_039478_2_0_6"/>
<dbReference type="OrthoDB" id="9789727at2"/>
<dbReference type="UniPathway" id="UPA00379">
    <property type="reaction ID" value="UER00552"/>
</dbReference>
<dbReference type="Proteomes" id="UP000008148">
    <property type="component" value="Chromosome"/>
</dbReference>
<dbReference type="GO" id="GO:0008783">
    <property type="term" value="F:agmatinase activity"/>
    <property type="evidence" value="ECO:0007669"/>
    <property type="project" value="TreeGrafter"/>
</dbReference>
<dbReference type="GO" id="GO:0050415">
    <property type="term" value="F:formimidoylglutamase activity"/>
    <property type="evidence" value="ECO:0007669"/>
    <property type="project" value="UniProtKB-UniRule"/>
</dbReference>
<dbReference type="GO" id="GO:0030145">
    <property type="term" value="F:manganese ion binding"/>
    <property type="evidence" value="ECO:0007669"/>
    <property type="project" value="UniProtKB-UniRule"/>
</dbReference>
<dbReference type="GO" id="GO:0019556">
    <property type="term" value="P:L-histidine catabolic process to glutamate and formamide"/>
    <property type="evidence" value="ECO:0007669"/>
    <property type="project" value="UniProtKB-UniPathway"/>
</dbReference>
<dbReference type="GO" id="GO:0019557">
    <property type="term" value="P:L-histidine catabolic process to glutamate and formate"/>
    <property type="evidence" value="ECO:0007669"/>
    <property type="project" value="UniProtKB-UniPathway"/>
</dbReference>
<dbReference type="GO" id="GO:0033389">
    <property type="term" value="P:putrescine biosynthetic process from arginine, via agmatine"/>
    <property type="evidence" value="ECO:0007669"/>
    <property type="project" value="TreeGrafter"/>
</dbReference>
<dbReference type="CDD" id="cd09988">
    <property type="entry name" value="Formimidoylglutamase"/>
    <property type="match status" value="1"/>
</dbReference>
<dbReference type="FunFam" id="3.40.800.10:FF:000010">
    <property type="entry name" value="Formimidoylglutamase"/>
    <property type="match status" value="1"/>
</dbReference>
<dbReference type="Gene3D" id="3.40.800.10">
    <property type="entry name" value="Ureohydrolase domain"/>
    <property type="match status" value="1"/>
</dbReference>
<dbReference type="HAMAP" id="MF_00737">
    <property type="entry name" value="Formimidoylglutam"/>
    <property type="match status" value="1"/>
</dbReference>
<dbReference type="InterPro" id="IPR005923">
    <property type="entry name" value="HutG"/>
</dbReference>
<dbReference type="InterPro" id="IPR006035">
    <property type="entry name" value="Ureohydrolase"/>
</dbReference>
<dbReference type="InterPro" id="IPR023696">
    <property type="entry name" value="Ureohydrolase_dom_sf"/>
</dbReference>
<dbReference type="InterPro" id="IPR020855">
    <property type="entry name" value="Ureohydrolase_Mn_BS"/>
</dbReference>
<dbReference type="NCBIfam" id="TIGR01227">
    <property type="entry name" value="hutG"/>
    <property type="match status" value="1"/>
</dbReference>
<dbReference type="PANTHER" id="PTHR11358">
    <property type="entry name" value="ARGINASE/AGMATINASE"/>
    <property type="match status" value="1"/>
</dbReference>
<dbReference type="PANTHER" id="PTHR11358:SF35">
    <property type="entry name" value="FORMIMIDOYLGLUTAMASE"/>
    <property type="match status" value="1"/>
</dbReference>
<dbReference type="Pfam" id="PF00491">
    <property type="entry name" value="Arginase"/>
    <property type="match status" value="1"/>
</dbReference>
<dbReference type="PIRSF" id="PIRSF036979">
    <property type="entry name" value="Arginase"/>
    <property type="match status" value="1"/>
</dbReference>
<dbReference type="SUPFAM" id="SSF52768">
    <property type="entry name" value="Arginase/deacetylase"/>
    <property type="match status" value="1"/>
</dbReference>
<dbReference type="PROSITE" id="PS01053">
    <property type="entry name" value="ARGINASE_1"/>
    <property type="match status" value="1"/>
</dbReference>
<dbReference type="PROSITE" id="PS51409">
    <property type="entry name" value="ARGINASE_2"/>
    <property type="match status" value="1"/>
</dbReference>
<keyword id="KW-0369">Histidine metabolism</keyword>
<keyword id="KW-0378">Hydrolase</keyword>
<keyword id="KW-0464">Manganese</keyword>
<keyword id="KW-0479">Metal-binding</keyword>
<keyword id="KW-1185">Reference proteome</keyword>
<proteinExistence type="inferred from homology"/>
<sequence>MTQWQPASPTLWQGRDDSAEAANALRLFQTVTRSPTFSPEMYREKIALLGFACDEGVKRNQGRPGAAGAPDALRRALANLASHHGHDRLVDLGNIIAQAPDLEGAQQALRDAVRRCQQADMRTFVLGGGHETAFGHGAGLLDAFPHARVGIINLDAHLDLRRADHATSGTPFRQLAQLCDEQQREFHYACFGVSRAANTQALWDEAQQRGVTIVEDVDCDTAQAPLAQVIDSVDKIYLTIDLDVLPAWEMPAVSAPAALGVPLATVMRLVDAVCRSGKLQAVDMVEFNPRFDDDGNAARVAARLGWQIAHGWR</sequence>
<organism>
    <name type="scientific">Citrobacter koseri (strain ATCC BAA-895 / CDC 4225-83 / SGSC4696)</name>
    <dbReference type="NCBI Taxonomy" id="290338"/>
    <lineage>
        <taxon>Bacteria</taxon>
        <taxon>Pseudomonadati</taxon>
        <taxon>Pseudomonadota</taxon>
        <taxon>Gammaproteobacteria</taxon>
        <taxon>Enterobacterales</taxon>
        <taxon>Enterobacteriaceae</taxon>
        <taxon>Citrobacter</taxon>
    </lineage>
</organism>
<protein>
    <recommendedName>
        <fullName evidence="1">Formimidoylglutamase</fullName>
        <ecNumber evidence="1">3.5.3.8</ecNumber>
    </recommendedName>
    <alternativeName>
        <fullName evidence="1">Formiminoglutamase</fullName>
    </alternativeName>
    <alternativeName>
        <fullName evidence="1">Formiminoglutamate hydrolase</fullName>
    </alternativeName>
</protein>
<name>HUTG_CITK8</name>